<protein>
    <recommendedName>
        <fullName evidence="1">Large ribosomal subunit protein bL9</fullName>
    </recommendedName>
    <alternativeName>
        <fullName evidence="2">50S ribosomal protein L9</fullName>
    </alternativeName>
</protein>
<dbReference type="EMBL" id="CP000749">
    <property type="protein sequence ID" value="ABR72365.1"/>
    <property type="molecule type" value="Genomic_DNA"/>
</dbReference>
<dbReference type="SMR" id="A6W0Y6"/>
<dbReference type="STRING" id="400668.Mmwyl1_3462"/>
<dbReference type="KEGG" id="mmw:Mmwyl1_3462"/>
<dbReference type="eggNOG" id="COG0359">
    <property type="taxonomic scope" value="Bacteria"/>
</dbReference>
<dbReference type="HOGENOM" id="CLU_078938_4_1_6"/>
<dbReference type="OrthoDB" id="9788336at2"/>
<dbReference type="GO" id="GO:1990904">
    <property type="term" value="C:ribonucleoprotein complex"/>
    <property type="evidence" value="ECO:0007669"/>
    <property type="project" value="UniProtKB-KW"/>
</dbReference>
<dbReference type="GO" id="GO:0005840">
    <property type="term" value="C:ribosome"/>
    <property type="evidence" value="ECO:0007669"/>
    <property type="project" value="UniProtKB-KW"/>
</dbReference>
<dbReference type="GO" id="GO:0019843">
    <property type="term" value="F:rRNA binding"/>
    <property type="evidence" value="ECO:0007669"/>
    <property type="project" value="UniProtKB-UniRule"/>
</dbReference>
<dbReference type="GO" id="GO:0003735">
    <property type="term" value="F:structural constituent of ribosome"/>
    <property type="evidence" value="ECO:0007669"/>
    <property type="project" value="InterPro"/>
</dbReference>
<dbReference type="GO" id="GO:0006412">
    <property type="term" value="P:translation"/>
    <property type="evidence" value="ECO:0007669"/>
    <property type="project" value="UniProtKB-UniRule"/>
</dbReference>
<dbReference type="Gene3D" id="3.10.430.100">
    <property type="entry name" value="Ribosomal protein L9, C-terminal domain"/>
    <property type="match status" value="1"/>
</dbReference>
<dbReference type="Gene3D" id="3.40.5.10">
    <property type="entry name" value="Ribosomal protein L9, N-terminal domain"/>
    <property type="match status" value="1"/>
</dbReference>
<dbReference type="HAMAP" id="MF_00503">
    <property type="entry name" value="Ribosomal_bL9"/>
    <property type="match status" value="1"/>
</dbReference>
<dbReference type="InterPro" id="IPR000244">
    <property type="entry name" value="Ribosomal_bL9"/>
</dbReference>
<dbReference type="InterPro" id="IPR009027">
    <property type="entry name" value="Ribosomal_bL9/RNase_H1_N"/>
</dbReference>
<dbReference type="InterPro" id="IPR020594">
    <property type="entry name" value="Ribosomal_bL9_bac/chp"/>
</dbReference>
<dbReference type="InterPro" id="IPR020069">
    <property type="entry name" value="Ribosomal_bL9_C"/>
</dbReference>
<dbReference type="InterPro" id="IPR036791">
    <property type="entry name" value="Ribosomal_bL9_C_sf"/>
</dbReference>
<dbReference type="InterPro" id="IPR020070">
    <property type="entry name" value="Ribosomal_bL9_N"/>
</dbReference>
<dbReference type="InterPro" id="IPR036935">
    <property type="entry name" value="Ribosomal_bL9_N_sf"/>
</dbReference>
<dbReference type="NCBIfam" id="TIGR00158">
    <property type="entry name" value="L9"/>
    <property type="match status" value="1"/>
</dbReference>
<dbReference type="PANTHER" id="PTHR21368">
    <property type="entry name" value="50S RIBOSOMAL PROTEIN L9"/>
    <property type="match status" value="1"/>
</dbReference>
<dbReference type="Pfam" id="PF03948">
    <property type="entry name" value="Ribosomal_L9_C"/>
    <property type="match status" value="1"/>
</dbReference>
<dbReference type="Pfam" id="PF01281">
    <property type="entry name" value="Ribosomal_L9_N"/>
    <property type="match status" value="1"/>
</dbReference>
<dbReference type="SUPFAM" id="SSF55658">
    <property type="entry name" value="L9 N-domain-like"/>
    <property type="match status" value="1"/>
</dbReference>
<dbReference type="SUPFAM" id="SSF55653">
    <property type="entry name" value="Ribosomal protein L9 C-domain"/>
    <property type="match status" value="1"/>
</dbReference>
<dbReference type="PROSITE" id="PS00651">
    <property type="entry name" value="RIBOSOMAL_L9"/>
    <property type="match status" value="1"/>
</dbReference>
<feature type="chain" id="PRO_1000081485" description="Large ribosomal subunit protein bL9">
    <location>
        <begin position="1"/>
        <end position="147"/>
    </location>
</feature>
<proteinExistence type="inferred from homology"/>
<name>RL9_MARMS</name>
<reference key="1">
    <citation type="submission" date="2007-06" db="EMBL/GenBank/DDBJ databases">
        <title>Complete sequence of Marinomonas sp. MWYL1.</title>
        <authorList>
            <consortium name="US DOE Joint Genome Institute"/>
            <person name="Copeland A."/>
            <person name="Lucas S."/>
            <person name="Lapidus A."/>
            <person name="Barry K."/>
            <person name="Glavina del Rio T."/>
            <person name="Dalin E."/>
            <person name="Tice H."/>
            <person name="Pitluck S."/>
            <person name="Kiss H."/>
            <person name="Brettin T."/>
            <person name="Bruce D."/>
            <person name="Detter J.C."/>
            <person name="Han C."/>
            <person name="Schmutz J."/>
            <person name="Larimer F."/>
            <person name="Land M."/>
            <person name="Hauser L."/>
            <person name="Kyrpides N."/>
            <person name="Kim E."/>
            <person name="Johnston A.W.B."/>
            <person name="Todd J.D."/>
            <person name="Rogers R."/>
            <person name="Wexler M."/>
            <person name="Bond P.L."/>
            <person name="Li Y."/>
            <person name="Richardson P."/>
        </authorList>
    </citation>
    <scope>NUCLEOTIDE SEQUENCE [LARGE SCALE GENOMIC DNA]</scope>
    <source>
        <strain>MWYL1</strain>
    </source>
</reference>
<accession>A6W0Y6</accession>
<gene>
    <name evidence="1" type="primary">rplI</name>
    <name type="ordered locus">Mmwyl1_3462</name>
</gene>
<sequence>MEVILLDKVNKLGGIGDVAVVKPGYARNFLIPNKKAVMATKANLASFEERRVELEAQAAERKAAAEARALTLEGKTFTIAANAGDEGKLFGSIGTRDIADAISTQVAVEKAEIRLPEGAIRHTGSFEVDVQLHSEVIVTVTLEVIAE</sequence>
<organism>
    <name type="scientific">Marinomonas sp. (strain MWYL1)</name>
    <dbReference type="NCBI Taxonomy" id="400668"/>
    <lineage>
        <taxon>Bacteria</taxon>
        <taxon>Pseudomonadati</taxon>
        <taxon>Pseudomonadota</taxon>
        <taxon>Gammaproteobacteria</taxon>
        <taxon>Oceanospirillales</taxon>
        <taxon>Oceanospirillaceae</taxon>
        <taxon>Marinomonas</taxon>
    </lineage>
</organism>
<keyword id="KW-0687">Ribonucleoprotein</keyword>
<keyword id="KW-0689">Ribosomal protein</keyword>
<keyword id="KW-0694">RNA-binding</keyword>
<keyword id="KW-0699">rRNA-binding</keyword>
<evidence type="ECO:0000255" key="1">
    <source>
        <dbReference type="HAMAP-Rule" id="MF_00503"/>
    </source>
</evidence>
<evidence type="ECO:0000305" key="2"/>
<comment type="function">
    <text evidence="1">Binds to the 23S rRNA.</text>
</comment>
<comment type="similarity">
    <text evidence="1">Belongs to the bacterial ribosomal protein bL9 family.</text>
</comment>